<comment type="function">
    <text evidence="1">Involved in the transmission of sensory signals from the chemoreceptors to the flagellar motors.</text>
</comment>
<comment type="subcellular location">
    <subcellularLocation>
        <location evidence="1">Cytoplasm</location>
    </subcellularLocation>
</comment>
<gene>
    <name type="primary">cheW</name>
    <name type="ordered locus">R00640</name>
    <name type="ORF">SMc03008</name>
</gene>
<sequence length="155" mass="16835">MTNAAKHLTNGGRELIAFRVGDQEFCVNIMAVREIRGWTPATPMPHAPAYVLGVINLRGAVLPIVDFSARLGMKAAEPTVRHVIIVAQVKSRVVGLLVDAVSDILTVSDRDIQPTPDIASDFERSFARGVLAIEGRMICLVELDSVFPSEEREAA</sequence>
<evidence type="ECO:0000250" key="1"/>
<evidence type="ECO:0000255" key="2">
    <source>
        <dbReference type="PROSITE-ProRule" id="PRU00052"/>
    </source>
</evidence>
<evidence type="ECO:0000305" key="3"/>
<keyword id="KW-0145">Chemotaxis</keyword>
<keyword id="KW-0963">Cytoplasm</keyword>
<keyword id="KW-1185">Reference proteome</keyword>
<protein>
    <recommendedName>
        <fullName>Chemotaxis protein CheW</fullName>
    </recommendedName>
</protein>
<organism>
    <name type="scientific">Rhizobium meliloti (strain 1021)</name>
    <name type="common">Ensifer meliloti</name>
    <name type="synonym">Sinorhizobium meliloti</name>
    <dbReference type="NCBI Taxonomy" id="266834"/>
    <lineage>
        <taxon>Bacteria</taxon>
        <taxon>Pseudomonadati</taxon>
        <taxon>Pseudomonadota</taxon>
        <taxon>Alphaproteobacteria</taxon>
        <taxon>Hyphomicrobiales</taxon>
        <taxon>Rhizobiaceae</taxon>
        <taxon>Sinorhizobium/Ensifer group</taxon>
        <taxon>Sinorhizobium</taxon>
    </lineage>
</organism>
<name>CHEW_RHIME</name>
<accession>Q52881</accession>
<reference key="1">
    <citation type="journal article" date="1995" name="Mol. Microbiol.">
        <title>Analysis of a chemotaxis operon in Rhizobium meliloti.</title>
        <authorList>
            <person name="Greck M."/>
            <person name="Platzer J."/>
            <person name="Sourjik V."/>
            <person name="Schmitt R."/>
        </authorList>
    </citation>
    <scope>NUCLEOTIDE SEQUENCE [GENOMIC DNA]</scope>
    <source>
        <strain>RU11/001</strain>
    </source>
</reference>
<reference key="2">
    <citation type="journal article" date="2001" name="Proc. Natl. Acad. Sci. U.S.A.">
        <title>Analysis of the chromosome sequence of the legume symbiont Sinorhizobium meliloti strain 1021.</title>
        <authorList>
            <person name="Capela D."/>
            <person name="Barloy-Hubler F."/>
            <person name="Gouzy J."/>
            <person name="Bothe G."/>
            <person name="Ampe F."/>
            <person name="Batut J."/>
            <person name="Boistard P."/>
            <person name="Becker A."/>
            <person name="Boutry M."/>
            <person name="Cadieu E."/>
            <person name="Dreano S."/>
            <person name="Gloux S."/>
            <person name="Godrie T."/>
            <person name="Goffeau A."/>
            <person name="Kahn D."/>
            <person name="Kiss E."/>
            <person name="Lelaure V."/>
            <person name="Masuy D."/>
            <person name="Pohl T."/>
            <person name="Portetelle D."/>
            <person name="Puehler A."/>
            <person name="Purnelle B."/>
            <person name="Ramsperger U."/>
            <person name="Renard C."/>
            <person name="Thebault P."/>
            <person name="Vandenbol M."/>
            <person name="Weidner S."/>
            <person name="Galibert F."/>
        </authorList>
    </citation>
    <scope>NUCLEOTIDE SEQUENCE [LARGE SCALE GENOMIC DNA]</scope>
    <source>
        <strain>1021</strain>
    </source>
</reference>
<reference key="3">
    <citation type="journal article" date="2001" name="Science">
        <title>The composite genome of the legume symbiont Sinorhizobium meliloti.</title>
        <authorList>
            <person name="Galibert F."/>
            <person name="Finan T.M."/>
            <person name="Long S.R."/>
            <person name="Puehler A."/>
            <person name="Abola P."/>
            <person name="Ampe F."/>
            <person name="Barloy-Hubler F."/>
            <person name="Barnett M.J."/>
            <person name="Becker A."/>
            <person name="Boistard P."/>
            <person name="Bothe G."/>
            <person name="Boutry M."/>
            <person name="Bowser L."/>
            <person name="Buhrmester J."/>
            <person name="Cadieu E."/>
            <person name="Capela D."/>
            <person name="Chain P."/>
            <person name="Cowie A."/>
            <person name="Davis R.W."/>
            <person name="Dreano S."/>
            <person name="Federspiel N.A."/>
            <person name="Fisher R.F."/>
            <person name="Gloux S."/>
            <person name="Godrie T."/>
            <person name="Goffeau A."/>
            <person name="Golding B."/>
            <person name="Gouzy J."/>
            <person name="Gurjal M."/>
            <person name="Hernandez-Lucas I."/>
            <person name="Hong A."/>
            <person name="Huizar L."/>
            <person name="Hyman R.W."/>
            <person name="Jones T."/>
            <person name="Kahn D."/>
            <person name="Kahn M.L."/>
            <person name="Kalman S."/>
            <person name="Keating D.H."/>
            <person name="Kiss E."/>
            <person name="Komp C."/>
            <person name="Lelaure V."/>
            <person name="Masuy D."/>
            <person name="Palm C."/>
            <person name="Peck M.C."/>
            <person name="Pohl T.M."/>
            <person name="Portetelle D."/>
            <person name="Purnelle B."/>
            <person name="Ramsperger U."/>
            <person name="Surzycki R."/>
            <person name="Thebault P."/>
            <person name="Vandenbol M."/>
            <person name="Vorhoelter F.J."/>
            <person name="Weidner S."/>
            <person name="Wells D.H."/>
            <person name="Wong K."/>
            <person name="Yeh K.-C."/>
            <person name="Batut J."/>
        </authorList>
    </citation>
    <scope>NUCLEOTIDE SEQUENCE [LARGE SCALE GENOMIC DNA]</scope>
    <source>
        <strain>1021</strain>
    </source>
</reference>
<dbReference type="EMBL" id="U13166">
    <property type="protein sequence ID" value="AAA86675.1"/>
    <property type="molecule type" value="Genomic_DNA"/>
</dbReference>
<dbReference type="EMBL" id="AL591688">
    <property type="protein sequence ID" value="CAC45212.1"/>
    <property type="molecule type" value="Genomic_DNA"/>
</dbReference>
<dbReference type="PIR" id="S61835">
    <property type="entry name" value="S61835"/>
</dbReference>
<dbReference type="RefSeq" id="NP_384746.1">
    <property type="nucleotide sequence ID" value="NC_003047.1"/>
</dbReference>
<dbReference type="RefSeq" id="WP_003529946.1">
    <property type="nucleotide sequence ID" value="NC_003047.1"/>
</dbReference>
<dbReference type="SMR" id="Q52881"/>
<dbReference type="EnsemblBacteria" id="CAC45212">
    <property type="protein sequence ID" value="CAC45212"/>
    <property type="gene ID" value="SMc03008"/>
</dbReference>
<dbReference type="KEGG" id="sme:SMc03008"/>
<dbReference type="PATRIC" id="fig|266834.11.peg.2013"/>
<dbReference type="eggNOG" id="COG0835">
    <property type="taxonomic scope" value="Bacteria"/>
</dbReference>
<dbReference type="HOGENOM" id="CLU_048995_3_4_5"/>
<dbReference type="OrthoDB" id="9794382at2"/>
<dbReference type="Proteomes" id="UP000001976">
    <property type="component" value="Chromosome"/>
</dbReference>
<dbReference type="GO" id="GO:0005829">
    <property type="term" value="C:cytosol"/>
    <property type="evidence" value="ECO:0007669"/>
    <property type="project" value="TreeGrafter"/>
</dbReference>
<dbReference type="GO" id="GO:0006935">
    <property type="term" value="P:chemotaxis"/>
    <property type="evidence" value="ECO:0007669"/>
    <property type="project" value="UniProtKB-KW"/>
</dbReference>
<dbReference type="GO" id="GO:0007165">
    <property type="term" value="P:signal transduction"/>
    <property type="evidence" value="ECO:0007669"/>
    <property type="project" value="InterPro"/>
</dbReference>
<dbReference type="CDD" id="cd00732">
    <property type="entry name" value="CheW"/>
    <property type="match status" value="1"/>
</dbReference>
<dbReference type="Gene3D" id="2.40.50.180">
    <property type="entry name" value="CheA-289, Domain 4"/>
    <property type="match status" value="1"/>
</dbReference>
<dbReference type="Gene3D" id="2.30.30.40">
    <property type="entry name" value="SH3 Domains"/>
    <property type="match status" value="1"/>
</dbReference>
<dbReference type="InterPro" id="IPR039315">
    <property type="entry name" value="CheW"/>
</dbReference>
<dbReference type="InterPro" id="IPR036061">
    <property type="entry name" value="CheW-like_dom_sf"/>
</dbReference>
<dbReference type="InterPro" id="IPR002545">
    <property type="entry name" value="CheW-lke_dom"/>
</dbReference>
<dbReference type="PANTHER" id="PTHR22617:SF23">
    <property type="entry name" value="CHEMOTAXIS PROTEIN CHEW"/>
    <property type="match status" value="1"/>
</dbReference>
<dbReference type="PANTHER" id="PTHR22617">
    <property type="entry name" value="CHEMOTAXIS SENSOR HISTIDINE KINASE-RELATED"/>
    <property type="match status" value="1"/>
</dbReference>
<dbReference type="Pfam" id="PF01584">
    <property type="entry name" value="CheW"/>
    <property type="match status" value="1"/>
</dbReference>
<dbReference type="SMART" id="SM00260">
    <property type="entry name" value="CheW"/>
    <property type="match status" value="1"/>
</dbReference>
<dbReference type="SUPFAM" id="SSF50341">
    <property type="entry name" value="CheW-like"/>
    <property type="match status" value="1"/>
</dbReference>
<dbReference type="PROSITE" id="PS50851">
    <property type="entry name" value="CHEW"/>
    <property type="match status" value="1"/>
</dbReference>
<feature type="chain" id="PRO_0000198345" description="Chemotaxis protein CheW">
    <location>
        <begin position="1"/>
        <end position="155"/>
    </location>
</feature>
<feature type="domain" description="CheW-like" evidence="2">
    <location>
        <begin position="12"/>
        <end position="152"/>
    </location>
</feature>
<feature type="sequence conflict" description="In Ref. 1; AAA86675." evidence="3" ref="1">
    <original>A</original>
    <variation>S</variation>
    <location>
        <position position="31"/>
    </location>
</feature>
<proteinExistence type="inferred from homology"/>